<reference key="1">
    <citation type="journal article" date="1997" name="Nature">
        <title>The complete genome sequence of the gastric pathogen Helicobacter pylori.</title>
        <authorList>
            <person name="Tomb J.-F."/>
            <person name="White O."/>
            <person name="Kerlavage A.R."/>
            <person name="Clayton R.A."/>
            <person name="Sutton G.G."/>
            <person name="Fleischmann R.D."/>
            <person name="Ketchum K.A."/>
            <person name="Klenk H.-P."/>
            <person name="Gill S.R."/>
            <person name="Dougherty B.A."/>
            <person name="Nelson K.E."/>
            <person name="Quackenbush J."/>
            <person name="Zhou L."/>
            <person name="Kirkness E.F."/>
            <person name="Peterson S.N."/>
            <person name="Loftus B.J."/>
            <person name="Richardson D.L."/>
            <person name="Dodson R.J."/>
            <person name="Khalak H.G."/>
            <person name="Glodek A."/>
            <person name="McKenney K."/>
            <person name="FitzGerald L.M."/>
            <person name="Lee N."/>
            <person name="Adams M.D."/>
            <person name="Hickey E.K."/>
            <person name="Berg D.E."/>
            <person name="Gocayne J.D."/>
            <person name="Utterback T.R."/>
            <person name="Peterson J.D."/>
            <person name="Kelley J.M."/>
            <person name="Cotton M.D."/>
            <person name="Weidman J.F."/>
            <person name="Fujii C."/>
            <person name="Bowman C."/>
            <person name="Watthey L."/>
            <person name="Wallin E."/>
            <person name="Hayes W.S."/>
            <person name="Borodovsky M."/>
            <person name="Karp P.D."/>
            <person name="Smith H.O."/>
            <person name="Fraser C.M."/>
            <person name="Venter J.C."/>
        </authorList>
    </citation>
    <scope>NUCLEOTIDE SEQUENCE [LARGE SCALE GENOMIC DNA]</scope>
    <source>
        <strain>ATCC 700392 / 26695</strain>
    </source>
</reference>
<comment type="function">
    <text evidence="1">Transfers the 4'-phosphopantetheine moiety from coenzyme A to a Ser of acyl-carrier-protein.</text>
</comment>
<comment type="catalytic activity">
    <reaction evidence="1">
        <text>apo-[ACP] + CoA = holo-[ACP] + adenosine 3',5'-bisphosphate + H(+)</text>
        <dbReference type="Rhea" id="RHEA:12068"/>
        <dbReference type="Rhea" id="RHEA-COMP:9685"/>
        <dbReference type="Rhea" id="RHEA-COMP:9690"/>
        <dbReference type="ChEBI" id="CHEBI:15378"/>
        <dbReference type="ChEBI" id="CHEBI:29999"/>
        <dbReference type="ChEBI" id="CHEBI:57287"/>
        <dbReference type="ChEBI" id="CHEBI:58343"/>
        <dbReference type="ChEBI" id="CHEBI:64479"/>
        <dbReference type="EC" id="2.7.8.7"/>
    </reaction>
</comment>
<comment type="cofactor">
    <cofactor evidence="1">
        <name>Mg(2+)</name>
        <dbReference type="ChEBI" id="CHEBI:18420"/>
    </cofactor>
</comment>
<comment type="subcellular location">
    <subcellularLocation>
        <location evidence="1">Cytoplasm</location>
    </subcellularLocation>
</comment>
<comment type="similarity">
    <text evidence="1">Belongs to the P-Pant transferase superfamily. AcpS family.</text>
</comment>
<feature type="chain" id="PRO_0000175653" description="Holo-[acyl-carrier-protein] synthase">
    <location>
        <begin position="1"/>
        <end position="119"/>
    </location>
</feature>
<feature type="binding site" evidence="1">
    <location>
        <position position="5"/>
    </location>
    <ligand>
        <name>Mg(2+)</name>
        <dbReference type="ChEBI" id="CHEBI:18420"/>
    </ligand>
</feature>
<feature type="binding site" evidence="1">
    <location>
        <position position="51"/>
    </location>
    <ligand>
        <name>Mg(2+)</name>
        <dbReference type="ChEBI" id="CHEBI:18420"/>
    </ligand>
</feature>
<feature type="strand" evidence="2">
    <location>
        <begin position="2"/>
        <end position="8"/>
    </location>
</feature>
<feature type="helix" evidence="2">
    <location>
        <begin position="9"/>
        <end position="15"/>
    </location>
</feature>
<feature type="helix" evidence="2">
    <location>
        <begin position="21"/>
        <end position="27"/>
    </location>
</feature>
<feature type="helix" evidence="2">
    <location>
        <begin position="30"/>
        <end position="36"/>
    </location>
</feature>
<feature type="helix" evidence="2">
    <location>
        <begin position="40"/>
        <end position="56"/>
    </location>
</feature>
<feature type="strand" evidence="2">
    <location>
        <begin position="61"/>
        <end position="65"/>
    </location>
</feature>
<feature type="helix" evidence="2">
    <location>
        <begin position="67"/>
        <end position="69"/>
    </location>
</feature>
<feature type="strand" evidence="2">
    <location>
        <begin position="70"/>
        <end position="74"/>
    </location>
</feature>
<feature type="strand" evidence="2">
    <location>
        <begin position="80"/>
        <end position="84"/>
    </location>
</feature>
<feature type="helix" evidence="2">
    <location>
        <begin position="86"/>
        <end position="91"/>
    </location>
</feature>
<feature type="strand" evidence="2">
    <location>
        <begin position="97"/>
        <end position="104"/>
    </location>
</feature>
<feature type="strand" evidence="2">
    <location>
        <begin position="107"/>
        <end position="114"/>
    </location>
</feature>
<proteinExistence type="evidence at protein level"/>
<organism>
    <name type="scientific">Helicobacter pylori (strain ATCC 700392 / 26695)</name>
    <name type="common">Campylobacter pylori</name>
    <dbReference type="NCBI Taxonomy" id="85962"/>
    <lineage>
        <taxon>Bacteria</taxon>
        <taxon>Pseudomonadati</taxon>
        <taxon>Campylobacterota</taxon>
        <taxon>Epsilonproteobacteria</taxon>
        <taxon>Campylobacterales</taxon>
        <taxon>Helicobacteraceae</taxon>
        <taxon>Helicobacter</taxon>
    </lineage>
</organism>
<keyword id="KW-0002">3D-structure</keyword>
<keyword id="KW-0963">Cytoplasm</keyword>
<keyword id="KW-0275">Fatty acid biosynthesis</keyword>
<keyword id="KW-0276">Fatty acid metabolism</keyword>
<keyword id="KW-0444">Lipid biosynthesis</keyword>
<keyword id="KW-0443">Lipid metabolism</keyword>
<keyword id="KW-0460">Magnesium</keyword>
<keyword id="KW-0479">Metal-binding</keyword>
<keyword id="KW-1185">Reference proteome</keyword>
<keyword id="KW-0808">Transferase</keyword>
<gene>
    <name evidence="1" type="primary">acpS</name>
    <name type="ordered locus">HP_0808</name>
</gene>
<evidence type="ECO:0000255" key="1">
    <source>
        <dbReference type="HAMAP-Rule" id="MF_00101"/>
    </source>
</evidence>
<evidence type="ECO:0007829" key="2">
    <source>
        <dbReference type="PDB" id="5XUK"/>
    </source>
</evidence>
<sequence>MIGIDIVSIARIEKCVKRFKMKFLERFLSPSEIVLCKDKSSSIAGFFALKEACSKALQVGIGKELSFLDIKISKSPKNAPLITLSKEKMDYFNIQSLSASISHDAGFAIAVVVVSSSNE</sequence>
<dbReference type="EC" id="2.7.8.7" evidence="1"/>
<dbReference type="EMBL" id="AE000511">
    <property type="protein sequence ID" value="AAD07855.1"/>
    <property type="molecule type" value="Genomic_DNA"/>
</dbReference>
<dbReference type="PIR" id="H64620">
    <property type="entry name" value="H64620"/>
</dbReference>
<dbReference type="RefSeq" id="NP_207601.1">
    <property type="nucleotide sequence ID" value="NC_000915.1"/>
</dbReference>
<dbReference type="RefSeq" id="WP_000579175.1">
    <property type="nucleotide sequence ID" value="NC_018939.1"/>
</dbReference>
<dbReference type="PDB" id="5XUK">
    <property type="method" value="X-ray"/>
    <property type="resolution" value="2.30 A"/>
    <property type="chains" value="A=1-119"/>
</dbReference>
<dbReference type="PDBsum" id="5XUK"/>
<dbReference type="SMR" id="O25488"/>
<dbReference type="FunCoup" id="O25488">
    <property type="interactions" value="116"/>
</dbReference>
<dbReference type="IntAct" id="O25488">
    <property type="interactions" value="12"/>
</dbReference>
<dbReference type="STRING" id="85962.HP_0808"/>
<dbReference type="PaxDb" id="85962-C694_04140"/>
<dbReference type="EnsemblBacteria" id="AAD07855">
    <property type="protein sequence ID" value="AAD07855"/>
    <property type="gene ID" value="HP_0808"/>
</dbReference>
<dbReference type="KEGG" id="heo:C694_04140"/>
<dbReference type="KEGG" id="hpy:HP_0808"/>
<dbReference type="PATRIC" id="fig|85962.47.peg.860"/>
<dbReference type="eggNOG" id="COG0736">
    <property type="taxonomic scope" value="Bacteria"/>
</dbReference>
<dbReference type="InParanoid" id="O25488"/>
<dbReference type="OrthoDB" id="517356at2"/>
<dbReference type="PhylomeDB" id="O25488"/>
<dbReference type="Proteomes" id="UP000000429">
    <property type="component" value="Chromosome"/>
</dbReference>
<dbReference type="GO" id="GO:0005737">
    <property type="term" value="C:cytoplasm"/>
    <property type="evidence" value="ECO:0007669"/>
    <property type="project" value="UniProtKB-SubCell"/>
</dbReference>
<dbReference type="GO" id="GO:0008897">
    <property type="term" value="F:holo-[acyl-carrier-protein] synthase activity"/>
    <property type="evidence" value="ECO:0007669"/>
    <property type="project" value="UniProtKB-UniRule"/>
</dbReference>
<dbReference type="GO" id="GO:0000287">
    <property type="term" value="F:magnesium ion binding"/>
    <property type="evidence" value="ECO:0007669"/>
    <property type="project" value="UniProtKB-UniRule"/>
</dbReference>
<dbReference type="GO" id="GO:0006633">
    <property type="term" value="P:fatty acid biosynthetic process"/>
    <property type="evidence" value="ECO:0007669"/>
    <property type="project" value="UniProtKB-UniRule"/>
</dbReference>
<dbReference type="Gene3D" id="3.90.470.20">
    <property type="entry name" value="4'-phosphopantetheinyl transferase domain"/>
    <property type="match status" value="1"/>
</dbReference>
<dbReference type="HAMAP" id="MF_00101">
    <property type="entry name" value="AcpS"/>
    <property type="match status" value="1"/>
</dbReference>
<dbReference type="InterPro" id="IPR008278">
    <property type="entry name" value="4-PPantetheinyl_Trfase_dom"/>
</dbReference>
<dbReference type="InterPro" id="IPR037143">
    <property type="entry name" value="4-PPantetheinyl_Trfase_dom_sf"/>
</dbReference>
<dbReference type="InterPro" id="IPR002582">
    <property type="entry name" value="ACPS"/>
</dbReference>
<dbReference type="InterPro" id="IPR004568">
    <property type="entry name" value="Ppantetheine-prot_Trfase_dom"/>
</dbReference>
<dbReference type="NCBIfam" id="TIGR00516">
    <property type="entry name" value="acpS"/>
    <property type="match status" value="1"/>
</dbReference>
<dbReference type="NCBIfam" id="TIGR00556">
    <property type="entry name" value="pantethn_trn"/>
    <property type="match status" value="1"/>
</dbReference>
<dbReference type="Pfam" id="PF01648">
    <property type="entry name" value="ACPS"/>
    <property type="match status" value="1"/>
</dbReference>
<dbReference type="SUPFAM" id="SSF56214">
    <property type="entry name" value="4'-phosphopantetheinyl transferase"/>
    <property type="match status" value="1"/>
</dbReference>
<accession>O25488</accession>
<name>ACPS_HELPY</name>
<protein>
    <recommendedName>
        <fullName evidence="1">Holo-[acyl-carrier-protein] synthase</fullName>
        <shortName evidence="1">Holo-ACP synthase</shortName>
        <ecNumber evidence="1">2.7.8.7</ecNumber>
    </recommendedName>
    <alternativeName>
        <fullName evidence="1">4'-phosphopantetheinyl transferase AcpS</fullName>
    </alternativeName>
</protein>